<gene>
    <name evidence="1" type="primary">rpsM</name>
    <name type="ordered locus">spyM18_0077</name>
</gene>
<organism>
    <name type="scientific">Streptococcus pyogenes serotype M18 (strain MGAS8232)</name>
    <dbReference type="NCBI Taxonomy" id="186103"/>
    <lineage>
        <taxon>Bacteria</taxon>
        <taxon>Bacillati</taxon>
        <taxon>Bacillota</taxon>
        <taxon>Bacilli</taxon>
        <taxon>Lactobacillales</taxon>
        <taxon>Streptococcaceae</taxon>
        <taxon>Streptococcus</taxon>
    </lineage>
</organism>
<comment type="function">
    <text evidence="1">Located at the top of the head of the 30S subunit, it contacts several helices of the 16S rRNA. In the 70S ribosome it contacts the 23S rRNA (bridge B1a) and protein L5 of the 50S subunit (bridge B1b), connecting the 2 subunits; these bridges are implicated in subunit movement. Contacts the tRNAs in the A and P-sites.</text>
</comment>
<comment type="subunit">
    <text evidence="1">Part of the 30S ribosomal subunit. Forms a loose heterodimer with protein S19. Forms two bridges to the 50S subunit in the 70S ribosome.</text>
</comment>
<comment type="similarity">
    <text evidence="1">Belongs to the universal ribosomal protein uS13 family.</text>
</comment>
<feature type="chain" id="PRO_0000132154" description="Small ribosomal subunit protein uS13">
    <location>
        <begin position="1"/>
        <end position="121"/>
    </location>
</feature>
<feature type="region of interest" description="Disordered" evidence="2">
    <location>
        <begin position="96"/>
        <end position="121"/>
    </location>
</feature>
<feature type="compositionally biased region" description="Basic residues" evidence="2">
    <location>
        <begin position="106"/>
        <end position="121"/>
    </location>
</feature>
<accession>P66396</accession>
<accession>Q9A1V1</accession>
<keyword id="KW-0687">Ribonucleoprotein</keyword>
<keyword id="KW-0689">Ribosomal protein</keyword>
<keyword id="KW-0694">RNA-binding</keyword>
<keyword id="KW-0699">rRNA-binding</keyword>
<keyword id="KW-0820">tRNA-binding</keyword>
<name>RS13_STRP8</name>
<protein>
    <recommendedName>
        <fullName evidence="1">Small ribosomal subunit protein uS13</fullName>
    </recommendedName>
    <alternativeName>
        <fullName evidence="3">30S ribosomal protein S13</fullName>
    </alternativeName>
</protein>
<reference key="1">
    <citation type="journal article" date="2002" name="Proc. Natl. Acad. Sci. U.S.A.">
        <title>Genome sequence and comparative microarray analysis of serotype M18 group A Streptococcus strains associated with acute rheumatic fever outbreaks.</title>
        <authorList>
            <person name="Smoot J.C."/>
            <person name="Barbian K.D."/>
            <person name="Van Gompel J.J."/>
            <person name="Smoot L.M."/>
            <person name="Chaussee M.S."/>
            <person name="Sylva G.L."/>
            <person name="Sturdevant D.E."/>
            <person name="Ricklefs S.M."/>
            <person name="Porcella S.F."/>
            <person name="Parkins L.D."/>
            <person name="Beres S.B."/>
            <person name="Campbell D.S."/>
            <person name="Smith T.M."/>
            <person name="Zhang Q."/>
            <person name="Kapur V."/>
            <person name="Daly J.A."/>
            <person name="Veasy L.G."/>
            <person name="Musser J.M."/>
        </authorList>
    </citation>
    <scope>NUCLEOTIDE SEQUENCE [LARGE SCALE GENOMIC DNA]</scope>
    <source>
        <strain>MGAS8232</strain>
    </source>
</reference>
<proteinExistence type="inferred from homology"/>
<dbReference type="EMBL" id="AE009949">
    <property type="protein sequence ID" value="AAL96900.1"/>
    <property type="molecule type" value="Genomic_DNA"/>
</dbReference>
<dbReference type="RefSeq" id="WP_002986615.1">
    <property type="nucleotide sequence ID" value="NC_003485.1"/>
</dbReference>
<dbReference type="SMR" id="P66396"/>
<dbReference type="GeneID" id="69900050"/>
<dbReference type="KEGG" id="spm:spyM18_0077"/>
<dbReference type="HOGENOM" id="CLU_103849_1_1_9"/>
<dbReference type="GO" id="GO:0005829">
    <property type="term" value="C:cytosol"/>
    <property type="evidence" value="ECO:0007669"/>
    <property type="project" value="TreeGrafter"/>
</dbReference>
<dbReference type="GO" id="GO:0015935">
    <property type="term" value="C:small ribosomal subunit"/>
    <property type="evidence" value="ECO:0007669"/>
    <property type="project" value="TreeGrafter"/>
</dbReference>
<dbReference type="GO" id="GO:0019843">
    <property type="term" value="F:rRNA binding"/>
    <property type="evidence" value="ECO:0007669"/>
    <property type="project" value="UniProtKB-UniRule"/>
</dbReference>
<dbReference type="GO" id="GO:0003735">
    <property type="term" value="F:structural constituent of ribosome"/>
    <property type="evidence" value="ECO:0007669"/>
    <property type="project" value="InterPro"/>
</dbReference>
<dbReference type="GO" id="GO:0000049">
    <property type="term" value="F:tRNA binding"/>
    <property type="evidence" value="ECO:0007669"/>
    <property type="project" value="UniProtKB-UniRule"/>
</dbReference>
<dbReference type="GO" id="GO:0006412">
    <property type="term" value="P:translation"/>
    <property type="evidence" value="ECO:0007669"/>
    <property type="project" value="UniProtKB-UniRule"/>
</dbReference>
<dbReference type="FunFam" id="1.10.8.50:FF:000001">
    <property type="entry name" value="30S ribosomal protein S13"/>
    <property type="match status" value="1"/>
</dbReference>
<dbReference type="FunFam" id="4.10.910.10:FF:000001">
    <property type="entry name" value="30S ribosomal protein S13"/>
    <property type="match status" value="1"/>
</dbReference>
<dbReference type="Gene3D" id="1.10.8.50">
    <property type="match status" value="1"/>
</dbReference>
<dbReference type="Gene3D" id="4.10.910.10">
    <property type="entry name" value="30s ribosomal protein s13, domain 2"/>
    <property type="match status" value="1"/>
</dbReference>
<dbReference type="HAMAP" id="MF_01315">
    <property type="entry name" value="Ribosomal_uS13"/>
    <property type="match status" value="1"/>
</dbReference>
<dbReference type="InterPro" id="IPR027437">
    <property type="entry name" value="Rbsml_uS13_C"/>
</dbReference>
<dbReference type="InterPro" id="IPR001892">
    <property type="entry name" value="Ribosomal_uS13"/>
</dbReference>
<dbReference type="InterPro" id="IPR010979">
    <property type="entry name" value="Ribosomal_uS13-like_H2TH"/>
</dbReference>
<dbReference type="InterPro" id="IPR019980">
    <property type="entry name" value="Ribosomal_uS13_bac-type"/>
</dbReference>
<dbReference type="InterPro" id="IPR018269">
    <property type="entry name" value="Ribosomal_uS13_CS"/>
</dbReference>
<dbReference type="NCBIfam" id="TIGR03631">
    <property type="entry name" value="uS13_bact"/>
    <property type="match status" value="1"/>
</dbReference>
<dbReference type="PANTHER" id="PTHR10871">
    <property type="entry name" value="30S RIBOSOMAL PROTEIN S13/40S RIBOSOMAL PROTEIN S18"/>
    <property type="match status" value="1"/>
</dbReference>
<dbReference type="PANTHER" id="PTHR10871:SF1">
    <property type="entry name" value="SMALL RIBOSOMAL SUBUNIT PROTEIN US13M"/>
    <property type="match status" value="1"/>
</dbReference>
<dbReference type="Pfam" id="PF00416">
    <property type="entry name" value="Ribosomal_S13"/>
    <property type="match status" value="1"/>
</dbReference>
<dbReference type="PIRSF" id="PIRSF002134">
    <property type="entry name" value="Ribosomal_S13"/>
    <property type="match status" value="1"/>
</dbReference>
<dbReference type="SUPFAM" id="SSF46946">
    <property type="entry name" value="S13-like H2TH domain"/>
    <property type="match status" value="1"/>
</dbReference>
<dbReference type="PROSITE" id="PS00646">
    <property type="entry name" value="RIBOSOMAL_S13_1"/>
    <property type="match status" value="1"/>
</dbReference>
<dbReference type="PROSITE" id="PS50159">
    <property type="entry name" value="RIBOSOMAL_S13_2"/>
    <property type="match status" value="1"/>
</dbReference>
<sequence>MARIAGVDIPNDKRVVISLTYVYGIGLATSKKILAAAGISEDIRVKDLTSDQEDAIRREVDAIKVEGDLRREVNMNIKRLMEIGSYRGIRHRRGLPVRGQNTKNNARTRKGKAVAIAGKKK</sequence>
<evidence type="ECO:0000255" key="1">
    <source>
        <dbReference type="HAMAP-Rule" id="MF_01315"/>
    </source>
</evidence>
<evidence type="ECO:0000256" key="2">
    <source>
        <dbReference type="SAM" id="MobiDB-lite"/>
    </source>
</evidence>
<evidence type="ECO:0000305" key="3"/>